<protein>
    <recommendedName>
        <fullName evidence="1">CTP synthase</fullName>
        <ecNumber evidence="1">6.3.4.2</ecNumber>
    </recommendedName>
    <alternativeName>
        <fullName evidence="1">Cytidine 5'-triphosphate synthase</fullName>
    </alternativeName>
    <alternativeName>
        <fullName evidence="1">Cytidine triphosphate synthetase</fullName>
        <shortName evidence="1">CTP synthetase</shortName>
        <shortName evidence="1">CTPS</shortName>
    </alternativeName>
    <alternativeName>
        <fullName evidence="1">UTP--ammonia ligase</fullName>
    </alternativeName>
</protein>
<dbReference type="EC" id="6.3.4.2" evidence="1"/>
<dbReference type="EMBL" id="CP000606">
    <property type="protein sequence ID" value="ABO23074.1"/>
    <property type="molecule type" value="Genomic_DNA"/>
</dbReference>
<dbReference type="RefSeq" id="WP_011865006.1">
    <property type="nucleotide sequence ID" value="NC_009092.1"/>
</dbReference>
<dbReference type="SMR" id="A3QC76"/>
<dbReference type="STRING" id="323850.Shew_1204"/>
<dbReference type="MEROPS" id="C26.964"/>
<dbReference type="KEGG" id="slo:Shew_1204"/>
<dbReference type="eggNOG" id="COG0504">
    <property type="taxonomic scope" value="Bacteria"/>
</dbReference>
<dbReference type="HOGENOM" id="CLU_011675_5_0_6"/>
<dbReference type="OrthoDB" id="9801107at2"/>
<dbReference type="UniPathway" id="UPA00159">
    <property type="reaction ID" value="UER00277"/>
</dbReference>
<dbReference type="Proteomes" id="UP000001558">
    <property type="component" value="Chromosome"/>
</dbReference>
<dbReference type="GO" id="GO:0005829">
    <property type="term" value="C:cytosol"/>
    <property type="evidence" value="ECO:0007669"/>
    <property type="project" value="TreeGrafter"/>
</dbReference>
<dbReference type="GO" id="GO:0005524">
    <property type="term" value="F:ATP binding"/>
    <property type="evidence" value="ECO:0007669"/>
    <property type="project" value="UniProtKB-KW"/>
</dbReference>
<dbReference type="GO" id="GO:0003883">
    <property type="term" value="F:CTP synthase activity"/>
    <property type="evidence" value="ECO:0007669"/>
    <property type="project" value="UniProtKB-UniRule"/>
</dbReference>
<dbReference type="GO" id="GO:0004359">
    <property type="term" value="F:glutaminase activity"/>
    <property type="evidence" value="ECO:0007669"/>
    <property type="project" value="RHEA"/>
</dbReference>
<dbReference type="GO" id="GO:0042802">
    <property type="term" value="F:identical protein binding"/>
    <property type="evidence" value="ECO:0007669"/>
    <property type="project" value="TreeGrafter"/>
</dbReference>
<dbReference type="GO" id="GO:0046872">
    <property type="term" value="F:metal ion binding"/>
    <property type="evidence" value="ECO:0007669"/>
    <property type="project" value="UniProtKB-KW"/>
</dbReference>
<dbReference type="GO" id="GO:0044210">
    <property type="term" value="P:'de novo' CTP biosynthetic process"/>
    <property type="evidence" value="ECO:0007669"/>
    <property type="project" value="UniProtKB-UniRule"/>
</dbReference>
<dbReference type="GO" id="GO:0019856">
    <property type="term" value="P:pyrimidine nucleobase biosynthetic process"/>
    <property type="evidence" value="ECO:0007669"/>
    <property type="project" value="TreeGrafter"/>
</dbReference>
<dbReference type="CDD" id="cd03113">
    <property type="entry name" value="CTPS_N"/>
    <property type="match status" value="1"/>
</dbReference>
<dbReference type="CDD" id="cd01746">
    <property type="entry name" value="GATase1_CTP_Synthase"/>
    <property type="match status" value="1"/>
</dbReference>
<dbReference type="FunFam" id="3.40.50.300:FF:000009">
    <property type="entry name" value="CTP synthase"/>
    <property type="match status" value="1"/>
</dbReference>
<dbReference type="FunFam" id="3.40.50.880:FF:000002">
    <property type="entry name" value="CTP synthase"/>
    <property type="match status" value="1"/>
</dbReference>
<dbReference type="Gene3D" id="3.40.50.880">
    <property type="match status" value="1"/>
</dbReference>
<dbReference type="Gene3D" id="3.40.50.300">
    <property type="entry name" value="P-loop containing nucleotide triphosphate hydrolases"/>
    <property type="match status" value="1"/>
</dbReference>
<dbReference type="HAMAP" id="MF_01227">
    <property type="entry name" value="PyrG"/>
    <property type="match status" value="1"/>
</dbReference>
<dbReference type="InterPro" id="IPR029062">
    <property type="entry name" value="Class_I_gatase-like"/>
</dbReference>
<dbReference type="InterPro" id="IPR004468">
    <property type="entry name" value="CTP_synthase"/>
</dbReference>
<dbReference type="InterPro" id="IPR017456">
    <property type="entry name" value="CTP_synthase_N"/>
</dbReference>
<dbReference type="InterPro" id="IPR017926">
    <property type="entry name" value="GATASE"/>
</dbReference>
<dbReference type="InterPro" id="IPR033828">
    <property type="entry name" value="GATase1_CTP_Synthase"/>
</dbReference>
<dbReference type="InterPro" id="IPR027417">
    <property type="entry name" value="P-loop_NTPase"/>
</dbReference>
<dbReference type="NCBIfam" id="NF003792">
    <property type="entry name" value="PRK05380.1"/>
    <property type="match status" value="1"/>
</dbReference>
<dbReference type="NCBIfam" id="TIGR00337">
    <property type="entry name" value="PyrG"/>
    <property type="match status" value="1"/>
</dbReference>
<dbReference type="PANTHER" id="PTHR11550">
    <property type="entry name" value="CTP SYNTHASE"/>
    <property type="match status" value="1"/>
</dbReference>
<dbReference type="PANTHER" id="PTHR11550:SF0">
    <property type="entry name" value="CTP SYNTHASE-RELATED"/>
    <property type="match status" value="1"/>
</dbReference>
<dbReference type="Pfam" id="PF06418">
    <property type="entry name" value="CTP_synth_N"/>
    <property type="match status" value="1"/>
</dbReference>
<dbReference type="Pfam" id="PF00117">
    <property type="entry name" value="GATase"/>
    <property type="match status" value="1"/>
</dbReference>
<dbReference type="SUPFAM" id="SSF52317">
    <property type="entry name" value="Class I glutamine amidotransferase-like"/>
    <property type="match status" value="1"/>
</dbReference>
<dbReference type="SUPFAM" id="SSF52540">
    <property type="entry name" value="P-loop containing nucleoside triphosphate hydrolases"/>
    <property type="match status" value="1"/>
</dbReference>
<dbReference type="PROSITE" id="PS51273">
    <property type="entry name" value="GATASE_TYPE_1"/>
    <property type="match status" value="1"/>
</dbReference>
<evidence type="ECO:0000255" key="1">
    <source>
        <dbReference type="HAMAP-Rule" id="MF_01227"/>
    </source>
</evidence>
<reference key="1">
    <citation type="submission" date="2007-03" db="EMBL/GenBank/DDBJ databases">
        <title>Complete sequence of Shewanella loihica PV-4.</title>
        <authorList>
            <consortium name="US DOE Joint Genome Institute"/>
            <person name="Copeland A."/>
            <person name="Lucas S."/>
            <person name="Lapidus A."/>
            <person name="Barry K."/>
            <person name="Detter J.C."/>
            <person name="Glavina del Rio T."/>
            <person name="Hammon N."/>
            <person name="Israni S."/>
            <person name="Dalin E."/>
            <person name="Tice H."/>
            <person name="Pitluck S."/>
            <person name="Chain P."/>
            <person name="Malfatti S."/>
            <person name="Shin M."/>
            <person name="Vergez L."/>
            <person name="Schmutz J."/>
            <person name="Larimer F."/>
            <person name="Land M."/>
            <person name="Hauser L."/>
            <person name="Kyrpides N."/>
            <person name="Mikhailova N."/>
            <person name="Romine M.F."/>
            <person name="Serres G."/>
            <person name="Fredrickson J."/>
            <person name="Tiedje J."/>
            <person name="Richardson P."/>
        </authorList>
    </citation>
    <scope>NUCLEOTIDE SEQUENCE [LARGE SCALE GENOMIC DNA]</scope>
    <source>
        <strain>ATCC BAA-1088 / PV-4</strain>
    </source>
</reference>
<proteinExistence type="inferred from homology"/>
<sequence length="545" mass="60215">MTTRYIFVTGGVVSSLGKGIAAASLAAILEARGLNVTIMKLDPYINLDPGTMSPTQHGEVFVTEDGAETDLDLGHYERFIRTKMNRRNNFTTGRIYEEVLRKERRGDYLGATIQVIPHITNAIKEKVLEGGEGHDVAIVEIGGTVGDIESLPFLESIRQLGVELGRDRTLFMHLTLVPFLGAAGEVKTKPTQHSVKELRSIGIAPDVLVCRGDRAIPSNEKAKISLFCNVEERAVISLKDVDSIYKIPALLKAQGLDDLVTKRFGLECREADLSEWENVIYQEANPTGEVTIGMVGKYTELPDAYKSVNEALKHAGLFNRVSVNIKYIDSQNIEAKGTEVLEGLDGILVPGGFGERGVEGKIMAAQYARENNLPYFGICLGMQVALIEFARHVAGLENAHSTEFNKDTPHPVVGLITEWIDEKGNIEQRHEESDLGGTMRLGAQLCHLIEGTKAAEAYKGLTCVERHRHRYEVNNTYRERLEKAGLVFSGLSTDRQLVEMIELPNHPWFVAGQFHPEFTSTPRDGQPLFQGFVAAAVAYQKRDLG</sequence>
<accession>A3QC76</accession>
<organism>
    <name type="scientific">Shewanella loihica (strain ATCC BAA-1088 / PV-4)</name>
    <dbReference type="NCBI Taxonomy" id="323850"/>
    <lineage>
        <taxon>Bacteria</taxon>
        <taxon>Pseudomonadati</taxon>
        <taxon>Pseudomonadota</taxon>
        <taxon>Gammaproteobacteria</taxon>
        <taxon>Alteromonadales</taxon>
        <taxon>Shewanellaceae</taxon>
        <taxon>Shewanella</taxon>
    </lineage>
</organism>
<comment type="function">
    <text evidence="1">Catalyzes the ATP-dependent amination of UTP to CTP with either L-glutamine or ammonia as the source of nitrogen. Regulates intracellular CTP levels through interactions with the four ribonucleotide triphosphates.</text>
</comment>
<comment type="catalytic activity">
    <reaction evidence="1">
        <text>UTP + L-glutamine + ATP + H2O = CTP + L-glutamate + ADP + phosphate + 2 H(+)</text>
        <dbReference type="Rhea" id="RHEA:26426"/>
        <dbReference type="ChEBI" id="CHEBI:15377"/>
        <dbReference type="ChEBI" id="CHEBI:15378"/>
        <dbReference type="ChEBI" id="CHEBI:29985"/>
        <dbReference type="ChEBI" id="CHEBI:30616"/>
        <dbReference type="ChEBI" id="CHEBI:37563"/>
        <dbReference type="ChEBI" id="CHEBI:43474"/>
        <dbReference type="ChEBI" id="CHEBI:46398"/>
        <dbReference type="ChEBI" id="CHEBI:58359"/>
        <dbReference type="ChEBI" id="CHEBI:456216"/>
        <dbReference type="EC" id="6.3.4.2"/>
    </reaction>
</comment>
<comment type="catalytic activity">
    <reaction evidence="1">
        <text>L-glutamine + H2O = L-glutamate + NH4(+)</text>
        <dbReference type="Rhea" id="RHEA:15889"/>
        <dbReference type="ChEBI" id="CHEBI:15377"/>
        <dbReference type="ChEBI" id="CHEBI:28938"/>
        <dbReference type="ChEBI" id="CHEBI:29985"/>
        <dbReference type="ChEBI" id="CHEBI:58359"/>
    </reaction>
</comment>
<comment type="catalytic activity">
    <reaction evidence="1">
        <text>UTP + NH4(+) + ATP = CTP + ADP + phosphate + 2 H(+)</text>
        <dbReference type="Rhea" id="RHEA:16597"/>
        <dbReference type="ChEBI" id="CHEBI:15378"/>
        <dbReference type="ChEBI" id="CHEBI:28938"/>
        <dbReference type="ChEBI" id="CHEBI:30616"/>
        <dbReference type="ChEBI" id="CHEBI:37563"/>
        <dbReference type="ChEBI" id="CHEBI:43474"/>
        <dbReference type="ChEBI" id="CHEBI:46398"/>
        <dbReference type="ChEBI" id="CHEBI:456216"/>
    </reaction>
</comment>
<comment type="activity regulation">
    <text evidence="1">Allosterically activated by GTP, when glutamine is the substrate; GTP has no effect on the reaction when ammonia is the substrate. The allosteric effector GTP functions by stabilizing the protein conformation that binds the tetrahedral intermediate(s) formed during glutamine hydrolysis. Inhibited by the product CTP, via allosteric rather than competitive inhibition.</text>
</comment>
<comment type="pathway">
    <text evidence="1">Pyrimidine metabolism; CTP biosynthesis via de novo pathway; CTP from UDP: step 2/2.</text>
</comment>
<comment type="subunit">
    <text evidence="1">Homotetramer.</text>
</comment>
<comment type="miscellaneous">
    <text evidence="1">CTPSs have evolved a hybrid strategy for distinguishing between UTP and CTP. The overlapping regions of the product feedback inhibitory and substrate sites recognize a common feature in both compounds, the triphosphate moiety. To differentiate isosteric substrate and product pyrimidine rings, an additional pocket far from the expected kinase/ligase catalytic site, specifically recognizes the cytosine and ribose portions of the product inhibitor.</text>
</comment>
<comment type="similarity">
    <text evidence="1">Belongs to the CTP synthase family.</text>
</comment>
<gene>
    <name evidence="1" type="primary">pyrG</name>
    <name type="ordered locus">Shew_1204</name>
</gene>
<name>PYRG_SHELP</name>
<keyword id="KW-0067">ATP-binding</keyword>
<keyword id="KW-0315">Glutamine amidotransferase</keyword>
<keyword id="KW-0436">Ligase</keyword>
<keyword id="KW-0460">Magnesium</keyword>
<keyword id="KW-0479">Metal-binding</keyword>
<keyword id="KW-0547">Nucleotide-binding</keyword>
<keyword id="KW-0665">Pyrimidine biosynthesis</keyword>
<keyword id="KW-1185">Reference proteome</keyword>
<feature type="chain" id="PRO_1000139572" description="CTP synthase">
    <location>
        <begin position="1"/>
        <end position="545"/>
    </location>
</feature>
<feature type="domain" description="Glutamine amidotransferase type-1" evidence="1">
    <location>
        <begin position="291"/>
        <end position="542"/>
    </location>
</feature>
<feature type="region of interest" description="Amidoligase domain" evidence="1">
    <location>
        <begin position="1"/>
        <end position="266"/>
    </location>
</feature>
<feature type="active site" description="Nucleophile; for glutamine hydrolysis" evidence="1">
    <location>
        <position position="379"/>
    </location>
</feature>
<feature type="active site" evidence="1">
    <location>
        <position position="515"/>
    </location>
</feature>
<feature type="active site" evidence="1">
    <location>
        <position position="517"/>
    </location>
</feature>
<feature type="binding site" evidence="1">
    <location>
        <position position="14"/>
    </location>
    <ligand>
        <name>CTP</name>
        <dbReference type="ChEBI" id="CHEBI:37563"/>
        <note>allosteric inhibitor</note>
    </ligand>
</feature>
<feature type="binding site" evidence="1">
    <location>
        <position position="14"/>
    </location>
    <ligand>
        <name>UTP</name>
        <dbReference type="ChEBI" id="CHEBI:46398"/>
    </ligand>
</feature>
<feature type="binding site" evidence="1">
    <location>
        <begin position="15"/>
        <end position="20"/>
    </location>
    <ligand>
        <name>ATP</name>
        <dbReference type="ChEBI" id="CHEBI:30616"/>
    </ligand>
</feature>
<feature type="binding site" evidence="1">
    <location>
        <position position="72"/>
    </location>
    <ligand>
        <name>ATP</name>
        <dbReference type="ChEBI" id="CHEBI:30616"/>
    </ligand>
</feature>
<feature type="binding site" evidence="1">
    <location>
        <position position="72"/>
    </location>
    <ligand>
        <name>Mg(2+)</name>
        <dbReference type="ChEBI" id="CHEBI:18420"/>
    </ligand>
</feature>
<feature type="binding site" evidence="1">
    <location>
        <position position="140"/>
    </location>
    <ligand>
        <name>Mg(2+)</name>
        <dbReference type="ChEBI" id="CHEBI:18420"/>
    </ligand>
</feature>
<feature type="binding site" evidence="1">
    <location>
        <begin position="147"/>
        <end position="149"/>
    </location>
    <ligand>
        <name>CTP</name>
        <dbReference type="ChEBI" id="CHEBI:37563"/>
        <note>allosteric inhibitor</note>
    </ligand>
</feature>
<feature type="binding site" evidence="1">
    <location>
        <begin position="187"/>
        <end position="192"/>
    </location>
    <ligand>
        <name>CTP</name>
        <dbReference type="ChEBI" id="CHEBI:37563"/>
        <note>allosteric inhibitor</note>
    </ligand>
</feature>
<feature type="binding site" evidence="1">
    <location>
        <begin position="187"/>
        <end position="192"/>
    </location>
    <ligand>
        <name>UTP</name>
        <dbReference type="ChEBI" id="CHEBI:46398"/>
    </ligand>
</feature>
<feature type="binding site" evidence="1">
    <location>
        <position position="223"/>
    </location>
    <ligand>
        <name>CTP</name>
        <dbReference type="ChEBI" id="CHEBI:37563"/>
        <note>allosteric inhibitor</note>
    </ligand>
</feature>
<feature type="binding site" evidence="1">
    <location>
        <position position="223"/>
    </location>
    <ligand>
        <name>UTP</name>
        <dbReference type="ChEBI" id="CHEBI:46398"/>
    </ligand>
</feature>
<feature type="binding site" evidence="1">
    <location>
        <begin position="239"/>
        <end position="241"/>
    </location>
    <ligand>
        <name>ATP</name>
        <dbReference type="ChEBI" id="CHEBI:30616"/>
    </ligand>
</feature>
<feature type="binding site" evidence="1">
    <location>
        <position position="352"/>
    </location>
    <ligand>
        <name>L-glutamine</name>
        <dbReference type="ChEBI" id="CHEBI:58359"/>
    </ligand>
</feature>
<feature type="binding site" evidence="1">
    <location>
        <begin position="380"/>
        <end position="383"/>
    </location>
    <ligand>
        <name>L-glutamine</name>
        <dbReference type="ChEBI" id="CHEBI:58359"/>
    </ligand>
</feature>
<feature type="binding site" evidence="1">
    <location>
        <position position="403"/>
    </location>
    <ligand>
        <name>L-glutamine</name>
        <dbReference type="ChEBI" id="CHEBI:58359"/>
    </ligand>
</feature>
<feature type="binding site" evidence="1">
    <location>
        <position position="470"/>
    </location>
    <ligand>
        <name>L-glutamine</name>
        <dbReference type="ChEBI" id="CHEBI:58359"/>
    </ligand>
</feature>